<name>ARAA_MANSM</name>
<proteinExistence type="inferred from homology"/>
<keyword id="KW-0054">Arabinose catabolism</keyword>
<keyword id="KW-0119">Carbohydrate metabolism</keyword>
<keyword id="KW-0413">Isomerase</keyword>
<keyword id="KW-0464">Manganese</keyword>
<keyword id="KW-0479">Metal-binding</keyword>
<reference key="1">
    <citation type="journal article" date="2004" name="Nat. Biotechnol.">
        <title>The genome sequence of the capnophilic rumen bacterium Mannheimia succiniciproducens.</title>
        <authorList>
            <person name="Hong S.H."/>
            <person name="Kim J.S."/>
            <person name="Lee S.Y."/>
            <person name="In Y.H."/>
            <person name="Choi S.S."/>
            <person name="Rih J.-K."/>
            <person name="Kim C.H."/>
            <person name="Jeong H."/>
            <person name="Hur C.G."/>
            <person name="Kim J.J."/>
        </authorList>
    </citation>
    <scope>NUCLEOTIDE SEQUENCE [LARGE SCALE GENOMIC DNA]</scope>
    <source>
        <strain>KCTC 0769BP / MBEL55E</strain>
    </source>
</reference>
<evidence type="ECO:0000255" key="1">
    <source>
        <dbReference type="HAMAP-Rule" id="MF_00519"/>
    </source>
</evidence>
<sequence>MEFLKKLEVWFVVGSQDLYGDEALKQVNANAEQITRYLNDQNPFIQIKLKPLATTPEDILSLCQAANYEENCVGVIAWMHTFSPAKMWIGGLTRLNKPLLQFHTQLNKNIPWNEIDMDYMNLHQTAHGDREFGFMVSRFRKPRTIVVGHWQSESVKQKLDRWMRVLAAIYDQQHLKVARFGDNMREVAVTEGDKVEAQIKFGYSVNGYGLYQLVNSINTVNDEDITALVKEYEASYQLADSLKDGGEKRQSLIDSARIELGLKAFLDKGGFKAFTDTFQNLAGIKQLPGLPVQRLMAQGYGFGAEGDWKTAALVRAIKVMSYGLPNGCSFMEDYTYNLDDNNEIVLGAHMLEVCPSIANNKPILDIKPLGIGGKEDPARLIFTSKSGKATASTIVDLGNRFRMITADMQAVDKPQDMPNLPVGHAFWKLEPNFDIGTQAWILSGGAHHNVFSLDIDADMLRTFAEYFDIEFIHINVKTELPNLKNELRWNEAAYK</sequence>
<dbReference type="EC" id="5.3.1.4" evidence="1"/>
<dbReference type="EMBL" id="AE016827">
    <property type="protein sequence ID" value="AAU36665.1"/>
    <property type="molecule type" value="Genomic_DNA"/>
</dbReference>
<dbReference type="RefSeq" id="WP_011199242.1">
    <property type="nucleotide sequence ID" value="NC_006300.1"/>
</dbReference>
<dbReference type="SMR" id="Q65WJ5"/>
<dbReference type="STRING" id="221988.MS0058"/>
<dbReference type="KEGG" id="msu:MS0058"/>
<dbReference type="eggNOG" id="COG2160">
    <property type="taxonomic scope" value="Bacteria"/>
</dbReference>
<dbReference type="HOGENOM" id="CLU_045663_0_0_6"/>
<dbReference type="OrthoDB" id="9765600at2"/>
<dbReference type="UniPathway" id="UPA00145">
    <property type="reaction ID" value="UER00565"/>
</dbReference>
<dbReference type="Proteomes" id="UP000000607">
    <property type="component" value="Chromosome"/>
</dbReference>
<dbReference type="GO" id="GO:0005829">
    <property type="term" value="C:cytosol"/>
    <property type="evidence" value="ECO:0007669"/>
    <property type="project" value="TreeGrafter"/>
</dbReference>
<dbReference type="GO" id="GO:0008733">
    <property type="term" value="F:L-arabinose isomerase activity"/>
    <property type="evidence" value="ECO:0007669"/>
    <property type="project" value="UniProtKB-UniRule"/>
</dbReference>
<dbReference type="GO" id="GO:0030145">
    <property type="term" value="F:manganese ion binding"/>
    <property type="evidence" value="ECO:0007669"/>
    <property type="project" value="UniProtKB-UniRule"/>
</dbReference>
<dbReference type="GO" id="GO:0019569">
    <property type="term" value="P:L-arabinose catabolic process to xylulose 5-phosphate"/>
    <property type="evidence" value="ECO:0007669"/>
    <property type="project" value="UniProtKB-UniRule"/>
</dbReference>
<dbReference type="CDD" id="cd03557">
    <property type="entry name" value="L-arabinose_isomerase"/>
    <property type="match status" value="1"/>
</dbReference>
<dbReference type="Gene3D" id="3.40.50.10940">
    <property type="match status" value="1"/>
</dbReference>
<dbReference type="HAMAP" id="MF_00519">
    <property type="entry name" value="Arabinose_Isome"/>
    <property type="match status" value="1"/>
</dbReference>
<dbReference type="InterPro" id="IPR024664">
    <property type="entry name" value="Ara_Isoase_C"/>
</dbReference>
<dbReference type="InterPro" id="IPR055390">
    <property type="entry name" value="AraA_central"/>
</dbReference>
<dbReference type="InterPro" id="IPR055389">
    <property type="entry name" value="AraA_N"/>
</dbReference>
<dbReference type="InterPro" id="IPR038583">
    <property type="entry name" value="AraA_N_sf"/>
</dbReference>
<dbReference type="InterPro" id="IPR004216">
    <property type="entry name" value="Fuc/Ara_isomerase_C"/>
</dbReference>
<dbReference type="InterPro" id="IPR009015">
    <property type="entry name" value="Fucose_isomerase_N/cen_sf"/>
</dbReference>
<dbReference type="InterPro" id="IPR003762">
    <property type="entry name" value="Lara_isomerase"/>
</dbReference>
<dbReference type="NCBIfam" id="NF002795">
    <property type="entry name" value="PRK02929.1"/>
    <property type="match status" value="1"/>
</dbReference>
<dbReference type="PANTHER" id="PTHR38464">
    <property type="entry name" value="L-ARABINOSE ISOMERASE"/>
    <property type="match status" value="1"/>
</dbReference>
<dbReference type="PANTHER" id="PTHR38464:SF1">
    <property type="entry name" value="L-ARABINOSE ISOMERASE"/>
    <property type="match status" value="1"/>
</dbReference>
<dbReference type="Pfam" id="PF24856">
    <property type="entry name" value="AraA_central"/>
    <property type="match status" value="1"/>
</dbReference>
<dbReference type="Pfam" id="PF02610">
    <property type="entry name" value="AraA_N"/>
    <property type="match status" value="1"/>
</dbReference>
<dbReference type="Pfam" id="PF11762">
    <property type="entry name" value="Arabinose_Iso_C"/>
    <property type="match status" value="1"/>
</dbReference>
<dbReference type="PIRSF" id="PIRSF001478">
    <property type="entry name" value="L-ara_isomerase"/>
    <property type="match status" value="1"/>
</dbReference>
<dbReference type="SUPFAM" id="SSF50443">
    <property type="entry name" value="FucI/AraA C-terminal domain-like"/>
    <property type="match status" value="1"/>
</dbReference>
<dbReference type="SUPFAM" id="SSF53743">
    <property type="entry name" value="FucI/AraA N-terminal and middle domains"/>
    <property type="match status" value="1"/>
</dbReference>
<feature type="chain" id="PRO_0000259340" description="L-arabinose isomerase">
    <location>
        <begin position="1"/>
        <end position="495"/>
    </location>
</feature>
<feature type="binding site" evidence="1">
    <location>
        <position position="305"/>
    </location>
    <ligand>
        <name>Mn(2+)</name>
        <dbReference type="ChEBI" id="CHEBI:29035"/>
    </ligand>
</feature>
<feature type="binding site" evidence="1">
    <location>
        <position position="332"/>
    </location>
    <ligand>
        <name>Mn(2+)</name>
        <dbReference type="ChEBI" id="CHEBI:29035"/>
    </ligand>
</feature>
<feature type="binding site" evidence="1">
    <location>
        <position position="349"/>
    </location>
    <ligand>
        <name>Mn(2+)</name>
        <dbReference type="ChEBI" id="CHEBI:29035"/>
    </ligand>
</feature>
<feature type="binding site" evidence="1">
    <location>
        <position position="448"/>
    </location>
    <ligand>
        <name>Mn(2+)</name>
        <dbReference type="ChEBI" id="CHEBI:29035"/>
    </ligand>
</feature>
<organism>
    <name type="scientific">Mannheimia succiniciproducens (strain KCTC 0769BP / MBEL55E)</name>
    <dbReference type="NCBI Taxonomy" id="221988"/>
    <lineage>
        <taxon>Bacteria</taxon>
        <taxon>Pseudomonadati</taxon>
        <taxon>Pseudomonadota</taxon>
        <taxon>Gammaproteobacteria</taxon>
        <taxon>Pasteurellales</taxon>
        <taxon>Pasteurellaceae</taxon>
        <taxon>Basfia</taxon>
    </lineage>
</organism>
<comment type="function">
    <text evidence="1">Catalyzes the conversion of L-arabinose to L-ribulose.</text>
</comment>
<comment type="catalytic activity">
    <reaction evidence="1">
        <text>beta-L-arabinopyranose = L-ribulose</text>
        <dbReference type="Rhea" id="RHEA:14821"/>
        <dbReference type="ChEBI" id="CHEBI:16880"/>
        <dbReference type="ChEBI" id="CHEBI:40886"/>
        <dbReference type="EC" id="5.3.1.4"/>
    </reaction>
</comment>
<comment type="cofactor">
    <cofactor evidence="1">
        <name>Mn(2+)</name>
        <dbReference type="ChEBI" id="CHEBI:29035"/>
    </cofactor>
    <text evidence="1">Binds 1 Mn(2+) ion per subunit.</text>
</comment>
<comment type="pathway">
    <text evidence="1">Carbohydrate degradation; L-arabinose degradation via L-ribulose; D-xylulose 5-phosphate from L-arabinose (bacterial route): step 1/3.</text>
</comment>
<comment type="similarity">
    <text evidence="1">Belongs to the arabinose isomerase family.</text>
</comment>
<gene>
    <name evidence="1" type="primary">araA</name>
    <name type="ordered locus">MS0058</name>
</gene>
<protein>
    <recommendedName>
        <fullName evidence="1">L-arabinose isomerase</fullName>
        <ecNumber evidence="1">5.3.1.4</ecNumber>
    </recommendedName>
</protein>
<accession>Q65WJ5</accession>